<evidence type="ECO:0000250" key="1">
    <source>
        <dbReference type="UniProtKB" id="Q15546"/>
    </source>
</evidence>
<evidence type="ECO:0000255" key="2"/>
<evidence type="ECO:0000269" key="3">
    <source>
    </source>
</evidence>
<evidence type="ECO:0000303" key="4">
    <source>
    </source>
</evidence>
<evidence type="ECO:0000305" key="5"/>
<evidence type="ECO:0000312" key="6">
    <source>
        <dbReference type="RGD" id="1592079"/>
    </source>
</evidence>
<reference key="1">
    <citation type="journal article" date="2004" name="FEBS Lett.">
        <title>Identification of macrophage/microglia activation factor (MAF) associated with late endosomes/lysosomes in microglial cells.</title>
        <authorList>
            <person name="Braeuer A.U."/>
            <person name="Nitsch R."/>
            <person name="Savaskan N.E."/>
        </authorList>
    </citation>
    <scope>NUCLEOTIDE SEQUENCE [MRNA]</scope>
    <scope>FUNCTION</scope>
    <scope>SUBCELLULAR LOCATION</scope>
    <source>
        <tissue>Brain</tissue>
    </source>
</reference>
<reference key="2">
    <citation type="journal article" date="2004" name="Genome Res.">
        <title>The status, quality, and expansion of the NIH full-length cDNA project: the Mammalian Gene Collection (MGC).</title>
        <authorList>
            <consortium name="The MGC Project Team"/>
        </authorList>
    </citation>
    <scope>NUCLEOTIDE SEQUENCE [LARGE SCALE MRNA]</scope>
    <source>
        <tissue>Lung</tissue>
    </source>
</reference>
<dbReference type="EMBL" id="AF540876">
    <property type="protein sequence ID" value="AAQ11225.1"/>
    <property type="molecule type" value="mRNA"/>
</dbReference>
<dbReference type="EMBL" id="BC081965">
    <property type="protein sequence ID" value="AAH81965.1"/>
    <property type="molecule type" value="mRNA"/>
</dbReference>
<dbReference type="RefSeq" id="NP_001007674.1">
    <property type="nucleotide sequence ID" value="NM_001007673.1"/>
</dbReference>
<dbReference type="RefSeq" id="XP_006247188.1">
    <property type="nucleotide sequence ID" value="XM_006247126.2"/>
</dbReference>
<dbReference type="SMR" id="Q719N3"/>
<dbReference type="FunCoup" id="Q719N3">
    <property type="interactions" value="658"/>
</dbReference>
<dbReference type="STRING" id="10116.ENSRNOP00000075635"/>
<dbReference type="PhosphoSitePlus" id="Q719N3"/>
<dbReference type="PaxDb" id="10116-ENSRNOP00000003308"/>
<dbReference type="Ensembl" id="ENSRNOT00000087765.2">
    <property type="protein sequence ID" value="ENSRNOP00000075635.1"/>
    <property type="gene ID" value="ENSRNOG00000002436.8"/>
</dbReference>
<dbReference type="GeneID" id="303439"/>
<dbReference type="KEGG" id="rno:303439"/>
<dbReference type="AGR" id="RGD:1592079"/>
<dbReference type="CTD" id="23531"/>
<dbReference type="RGD" id="1592079">
    <property type="gene designation" value="Mmd"/>
</dbReference>
<dbReference type="eggNOG" id="KOG4243">
    <property type="taxonomic scope" value="Eukaryota"/>
</dbReference>
<dbReference type="GeneTree" id="ENSGT00940000157428"/>
<dbReference type="HOGENOM" id="CLU_051078_0_0_1"/>
<dbReference type="InParanoid" id="Q719N3"/>
<dbReference type="OrthoDB" id="186812at2759"/>
<dbReference type="PhylomeDB" id="Q719N3"/>
<dbReference type="TreeFam" id="TF313370"/>
<dbReference type="PRO" id="PR:Q719N3"/>
<dbReference type="Proteomes" id="UP000002494">
    <property type="component" value="Chromosome 10"/>
</dbReference>
<dbReference type="Bgee" id="ENSRNOG00000002436">
    <property type="expression patterns" value="Expressed in Ammon's horn and 20 other cell types or tissues"/>
</dbReference>
<dbReference type="ExpressionAtlas" id="Q719N3">
    <property type="expression patterns" value="baseline and differential"/>
</dbReference>
<dbReference type="GO" id="GO:0005794">
    <property type="term" value="C:Golgi apparatus"/>
    <property type="evidence" value="ECO:0000266"/>
    <property type="project" value="RGD"/>
</dbReference>
<dbReference type="GO" id="GO:0031902">
    <property type="term" value="C:late endosome membrane"/>
    <property type="evidence" value="ECO:0007669"/>
    <property type="project" value="UniProtKB-SubCell"/>
</dbReference>
<dbReference type="GO" id="GO:0005765">
    <property type="term" value="C:lysosomal membrane"/>
    <property type="evidence" value="ECO:0007669"/>
    <property type="project" value="UniProtKB-SubCell"/>
</dbReference>
<dbReference type="GO" id="GO:0140911">
    <property type="term" value="F:pore-forming activity"/>
    <property type="evidence" value="ECO:0007669"/>
    <property type="project" value="InterPro"/>
</dbReference>
<dbReference type="GO" id="GO:0004672">
    <property type="term" value="F:protein kinase activity"/>
    <property type="evidence" value="ECO:0000266"/>
    <property type="project" value="RGD"/>
</dbReference>
<dbReference type="GO" id="GO:0045666">
    <property type="term" value="P:positive regulation of neuron differentiation"/>
    <property type="evidence" value="ECO:0000266"/>
    <property type="project" value="RGD"/>
</dbReference>
<dbReference type="GO" id="GO:0032880">
    <property type="term" value="P:regulation of protein localization"/>
    <property type="evidence" value="ECO:0000266"/>
    <property type="project" value="RGD"/>
</dbReference>
<dbReference type="InterPro" id="IPR004254">
    <property type="entry name" value="AdipoR/HlyIII-related"/>
</dbReference>
<dbReference type="InterPro" id="IPR005744">
    <property type="entry name" value="Hy-lIII"/>
</dbReference>
<dbReference type="NCBIfam" id="TIGR01065">
    <property type="entry name" value="hlyIII"/>
    <property type="match status" value="1"/>
</dbReference>
<dbReference type="PANTHER" id="PTHR20855">
    <property type="entry name" value="ADIPOR/PROGESTIN RECEPTOR-RELATED"/>
    <property type="match status" value="1"/>
</dbReference>
<dbReference type="PANTHER" id="PTHR20855:SF26">
    <property type="entry name" value="MONOCYTE TO MACROPHAGE DIFFERENTIATION FACTOR"/>
    <property type="match status" value="1"/>
</dbReference>
<dbReference type="Pfam" id="PF03006">
    <property type="entry name" value="HlyIII"/>
    <property type="match status" value="1"/>
</dbReference>
<organism>
    <name type="scientific">Rattus norvegicus</name>
    <name type="common">Rat</name>
    <dbReference type="NCBI Taxonomy" id="10116"/>
    <lineage>
        <taxon>Eukaryota</taxon>
        <taxon>Metazoa</taxon>
        <taxon>Chordata</taxon>
        <taxon>Craniata</taxon>
        <taxon>Vertebrata</taxon>
        <taxon>Euteleostomi</taxon>
        <taxon>Mammalia</taxon>
        <taxon>Eutheria</taxon>
        <taxon>Euarchontoglires</taxon>
        <taxon>Glires</taxon>
        <taxon>Rodentia</taxon>
        <taxon>Myomorpha</taxon>
        <taxon>Muroidea</taxon>
        <taxon>Muridae</taxon>
        <taxon>Murinae</taxon>
        <taxon>Rattus</taxon>
    </lineage>
</organism>
<proteinExistence type="evidence at transcript level"/>
<protein>
    <recommendedName>
        <fullName evidence="1">Monocyte to macrophage differentiation factor</fullName>
    </recommendedName>
    <alternativeName>
        <fullName evidence="4">Macrophage/microglia activation-associated factor</fullName>
        <shortName>MAF</shortName>
    </alternativeName>
    <alternativeName>
        <fullName evidence="1">Progestin and adipoQ receptor family member 11</fullName>
    </alternativeName>
    <alternativeName>
        <fullName>Progestin and adipoQ receptor family member XI</fullName>
    </alternativeName>
</protein>
<gene>
    <name evidence="6" type="primary">Mmd</name>
    <name type="synonym">Maf</name>
    <name evidence="1" type="synonym">Paqr11</name>
</gene>
<accession>Q719N3</accession>
<feature type="chain" id="PRO_0000218856" description="Monocyte to macrophage differentiation factor">
    <location>
        <begin position="1"/>
        <end position="238"/>
    </location>
</feature>
<feature type="topological domain" description="Cytoplasmic" evidence="2">
    <location>
        <begin position="1"/>
        <end position="28"/>
    </location>
</feature>
<feature type="transmembrane region" description="Helical" evidence="2">
    <location>
        <begin position="29"/>
        <end position="49"/>
    </location>
</feature>
<feature type="topological domain" description="Lumenal" evidence="2">
    <location>
        <begin position="50"/>
        <end position="61"/>
    </location>
</feature>
<feature type="transmembrane region" description="Helical" evidence="2">
    <location>
        <begin position="62"/>
        <end position="82"/>
    </location>
</feature>
<feature type="topological domain" description="Cytoplasmic" evidence="2">
    <location>
        <begin position="83"/>
        <end position="101"/>
    </location>
</feature>
<feature type="transmembrane region" description="Helical" evidence="2">
    <location>
        <begin position="102"/>
        <end position="122"/>
    </location>
</feature>
<feature type="topological domain" description="Lumenal" evidence="2">
    <location>
        <position position="123"/>
    </location>
</feature>
<feature type="transmembrane region" description="Helical" evidence="2">
    <location>
        <begin position="124"/>
        <end position="144"/>
    </location>
</feature>
<feature type="topological domain" description="Cytoplasmic" evidence="2">
    <location>
        <begin position="145"/>
        <end position="151"/>
    </location>
</feature>
<feature type="transmembrane region" description="Helical" evidence="2">
    <location>
        <begin position="152"/>
        <end position="172"/>
    </location>
</feature>
<feature type="topological domain" description="Lumenal" evidence="2">
    <location>
        <begin position="173"/>
        <end position="174"/>
    </location>
</feature>
<feature type="transmembrane region" description="Helical" evidence="2">
    <location>
        <begin position="175"/>
        <end position="195"/>
    </location>
</feature>
<feature type="topological domain" description="Cytoplasmic" evidence="2">
    <location>
        <begin position="196"/>
        <end position="198"/>
    </location>
</feature>
<feature type="transmembrane region" description="Helical" evidence="2">
    <location>
        <begin position="199"/>
        <end position="219"/>
    </location>
</feature>
<feature type="topological domain" description="Lumenal" evidence="2">
    <location>
        <begin position="220"/>
        <end position="238"/>
    </location>
</feature>
<sequence length="238" mass="27648">MQFRNRFQRFMNHRAPANGRYKPTCYEHAANCYTHAFLIVPAIVGSALLHRLSDDCWEKITAWIYGMGLCALFIVSTVFHIVSWKKSHLRTVEHCFHMCDRMVIYFFIAASYAPWLNLRELGPLASHMRWFIWLMAAGGTIYVFLYHEKYKVVELFFYLTMGFSPALVVTSMNNTDGLQELACGGLIYCLGVVFFKSDGIIPFAHAIWHLFVATAAAVHYYAIWKYLYRSPTDFIRHL</sequence>
<keyword id="KW-0967">Endosome</keyword>
<keyword id="KW-0458">Lysosome</keyword>
<keyword id="KW-0472">Membrane</keyword>
<keyword id="KW-0675">Receptor</keyword>
<keyword id="KW-1185">Reference proteome</keyword>
<keyword id="KW-0812">Transmembrane</keyword>
<keyword id="KW-1133">Transmembrane helix</keyword>
<name>PAQRB_RAT</name>
<comment type="function">
    <text evidence="3">Is involved in the dynamics of lysosomal membranes associated with microglial activation following brain lesion.</text>
</comment>
<comment type="subcellular location">
    <subcellularLocation>
        <location evidence="3">Late endosome membrane</location>
        <topology evidence="3">Multi-pass membrane protein</topology>
    </subcellularLocation>
    <subcellularLocation>
        <location evidence="3">Lysosome membrane</location>
        <topology evidence="3">Multi-pass membrane protein</topology>
    </subcellularLocation>
</comment>
<comment type="tissue specificity">
    <text>Preferentially expressed in the brain.</text>
</comment>
<comment type="similarity">
    <text evidence="5">Belongs to the ADIPOR family.</text>
</comment>